<evidence type="ECO:0000255" key="1">
    <source>
        <dbReference type="HAMAP-Rule" id="MF_01393"/>
    </source>
</evidence>
<gene>
    <name evidence="1" type="primary">atpB</name>
</gene>
<accession>P42010</accession>
<comment type="function">
    <text evidence="1">Key component of the proton channel; it plays a direct role in the translocation of protons across the membrane.</text>
</comment>
<comment type="subunit">
    <text evidence="1">F-type ATPases have 2 components, CF(1) - the catalytic core - and CF(0) - the membrane proton channel. CF(1) has five subunits: alpha(3), beta(3), gamma(1), delta(1), epsilon(1). CF(0) has three main subunits: a(1), b(2) and c(9-12). The alpha and beta chains form an alternating ring which encloses part of the gamma chain. CF(1) is attached to CF(0) by a central stalk formed by the gamma and epsilon chains, while a peripheral stalk is formed by the delta and b chains.</text>
</comment>
<comment type="subcellular location">
    <subcellularLocation>
        <location evidence="1">Cell membrane</location>
        <topology evidence="1">Multi-pass membrane protein</topology>
    </subcellularLocation>
</comment>
<comment type="similarity">
    <text evidence="1">Belongs to the ATPase A chain family.</text>
</comment>
<protein>
    <recommendedName>
        <fullName evidence="1">ATP synthase subunit a</fullName>
    </recommendedName>
    <alternativeName>
        <fullName evidence="1">ATP synthase F0 sector subunit a</fullName>
    </alternativeName>
    <alternativeName>
        <fullName evidence="1">F-ATPase subunit 6</fullName>
    </alternativeName>
</protein>
<keyword id="KW-0066">ATP synthesis</keyword>
<keyword id="KW-1003">Cell membrane</keyword>
<keyword id="KW-0138">CF(0)</keyword>
<keyword id="KW-0375">Hydrogen ion transport</keyword>
<keyword id="KW-0406">Ion transport</keyword>
<keyword id="KW-0472">Membrane</keyword>
<keyword id="KW-0812">Transmembrane</keyword>
<keyword id="KW-1133">Transmembrane helix</keyword>
<keyword id="KW-0813">Transport</keyword>
<dbReference type="EMBL" id="D38059">
    <property type="protein sequence ID" value="BAA07250.1"/>
    <property type="molecule type" value="Genomic_DNA"/>
</dbReference>
<dbReference type="SMR" id="P42010"/>
<dbReference type="GO" id="GO:0005886">
    <property type="term" value="C:plasma membrane"/>
    <property type="evidence" value="ECO:0007669"/>
    <property type="project" value="UniProtKB-SubCell"/>
</dbReference>
<dbReference type="GO" id="GO:0045259">
    <property type="term" value="C:proton-transporting ATP synthase complex"/>
    <property type="evidence" value="ECO:0007669"/>
    <property type="project" value="UniProtKB-KW"/>
</dbReference>
<dbReference type="GO" id="GO:0046933">
    <property type="term" value="F:proton-transporting ATP synthase activity, rotational mechanism"/>
    <property type="evidence" value="ECO:0007669"/>
    <property type="project" value="UniProtKB-UniRule"/>
</dbReference>
<dbReference type="GO" id="GO:0042777">
    <property type="term" value="P:proton motive force-driven plasma membrane ATP synthesis"/>
    <property type="evidence" value="ECO:0007669"/>
    <property type="project" value="TreeGrafter"/>
</dbReference>
<dbReference type="CDD" id="cd00310">
    <property type="entry name" value="ATP-synt_Fo_a_6"/>
    <property type="match status" value="1"/>
</dbReference>
<dbReference type="FunFam" id="1.20.120.220:FF:000005">
    <property type="entry name" value="ATP synthase subunit a"/>
    <property type="match status" value="1"/>
</dbReference>
<dbReference type="Gene3D" id="1.20.120.220">
    <property type="entry name" value="ATP synthase, F0 complex, subunit A"/>
    <property type="match status" value="1"/>
</dbReference>
<dbReference type="HAMAP" id="MF_01393">
    <property type="entry name" value="ATP_synth_a_bact"/>
    <property type="match status" value="1"/>
</dbReference>
<dbReference type="InterPro" id="IPR045082">
    <property type="entry name" value="ATP_syn_F0_a_bact/chloroplast"/>
</dbReference>
<dbReference type="InterPro" id="IPR000568">
    <property type="entry name" value="ATP_synth_F0_asu"/>
</dbReference>
<dbReference type="InterPro" id="IPR023011">
    <property type="entry name" value="ATP_synth_F0_asu_AS"/>
</dbReference>
<dbReference type="InterPro" id="IPR035908">
    <property type="entry name" value="F0_ATP_A_sf"/>
</dbReference>
<dbReference type="NCBIfam" id="TIGR01131">
    <property type="entry name" value="ATP_synt_6_or_A"/>
    <property type="match status" value="1"/>
</dbReference>
<dbReference type="NCBIfam" id="NF004479">
    <property type="entry name" value="PRK05815.1-4"/>
    <property type="match status" value="1"/>
</dbReference>
<dbReference type="PANTHER" id="PTHR42823">
    <property type="entry name" value="ATP SYNTHASE SUBUNIT A, CHLOROPLASTIC"/>
    <property type="match status" value="1"/>
</dbReference>
<dbReference type="PANTHER" id="PTHR42823:SF3">
    <property type="entry name" value="ATP SYNTHASE SUBUNIT A, CHLOROPLASTIC"/>
    <property type="match status" value="1"/>
</dbReference>
<dbReference type="Pfam" id="PF00119">
    <property type="entry name" value="ATP-synt_A"/>
    <property type="match status" value="1"/>
</dbReference>
<dbReference type="PRINTS" id="PR00123">
    <property type="entry name" value="ATPASEA"/>
</dbReference>
<dbReference type="SUPFAM" id="SSF81336">
    <property type="entry name" value="F1F0 ATP synthase subunit A"/>
    <property type="match status" value="1"/>
</dbReference>
<dbReference type="PROSITE" id="PS00449">
    <property type="entry name" value="ATPASE_A"/>
    <property type="match status" value="1"/>
</dbReference>
<feature type="chain" id="PRO_0000082047" description="ATP synthase subunit a">
    <location>
        <begin position="1"/>
        <end position="236"/>
    </location>
</feature>
<feature type="transmembrane region" description="Helical" evidence="1">
    <location>
        <begin position="17"/>
        <end position="37"/>
    </location>
</feature>
<feature type="transmembrane region" description="Helical" evidence="1">
    <location>
        <begin position="75"/>
        <end position="95"/>
    </location>
</feature>
<feature type="transmembrane region" description="Helical" evidence="1">
    <location>
        <begin position="112"/>
        <end position="132"/>
    </location>
</feature>
<feature type="transmembrane region" description="Helical" evidence="1">
    <location>
        <begin position="174"/>
        <end position="194"/>
    </location>
</feature>
<feature type="transmembrane region" description="Helical" evidence="1">
    <location>
        <begin position="208"/>
        <end position="228"/>
    </location>
</feature>
<reference key="1">
    <citation type="submission" date="1994-08" db="EMBL/GenBank/DDBJ databases">
        <title>Nucleotide sequence of the gene for a and c subunits of proton-ATPase from Bacillus stearothermophilus.</title>
        <authorList>
            <person name="Ishizuka M."/>
            <person name="Kamei T."/>
        </authorList>
    </citation>
    <scope>NUCLEOTIDE SEQUENCE [GENOMIC DNA]</scope>
</reference>
<name>ATP6_GEOSE</name>
<organism>
    <name type="scientific">Geobacillus stearothermophilus</name>
    <name type="common">Bacillus stearothermophilus</name>
    <dbReference type="NCBI Taxonomy" id="1422"/>
    <lineage>
        <taxon>Bacteria</taxon>
        <taxon>Bacillati</taxon>
        <taxon>Bacillota</taxon>
        <taxon>Bacilli</taxon>
        <taxon>Bacillales</taxon>
        <taxon>Anoxybacillaceae</taxon>
        <taxon>Geobacillus</taxon>
    </lineage>
</organism>
<sequence>MEHKAPLVEFLGLTFNLSDMLMITITCLIVFIIAVAATRSLQLRPTGMQNFMEWVFDFVRGIINSTMDWQTGGRFLTLGVTLIMYVFVANMLGLPFSVHVNGELWWKSPTADATVTLTLAVMVVALTHYYGVKMKGASDYLRDYTRPVAWLFPLKIIEEFANTLTLGLRLFGNIYAGEILLGLLASLGTHYGVLGAVGEHSMMVWQAFSIFVGTIQAFIFTMLTMVYMAHKVSHDH</sequence>
<proteinExistence type="inferred from homology"/>